<protein>
    <recommendedName>
        <fullName evidence="1">7-methyl-GTP pyrophosphatase</fullName>
        <shortName evidence="1">m(7)GTP pyrophosphatase</shortName>
        <ecNumber evidence="1">3.6.1.-</ecNumber>
    </recommendedName>
</protein>
<reference key="1">
    <citation type="journal article" date="2006" name="Proc. Natl. Acad. Sci. U.S.A.">
        <title>Identification of genes subject to positive selection in uropathogenic strains of Escherichia coli: a comparative genomics approach.</title>
        <authorList>
            <person name="Chen S.L."/>
            <person name="Hung C.-S."/>
            <person name="Xu J."/>
            <person name="Reigstad C.S."/>
            <person name="Magrini V."/>
            <person name="Sabo A."/>
            <person name="Blasiar D."/>
            <person name="Bieri T."/>
            <person name="Meyer R.R."/>
            <person name="Ozersky P."/>
            <person name="Armstrong J.R."/>
            <person name="Fulton R.S."/>
            <person name="Latreille J.P."/>
            <person name="Spieth J."/>
            <person name="Hooton T.M."/>
            <person name="Mardis E.R."/>
            <person name="Hultgren S.J."/>
            <person name="Gordon J.I."/>
        </authorList>
    </citation>
    <scope>NUCLEOTIDE SEQUENCE [LARGE SCALE GENOMIC DNA]</scope>
    <source>
        <strain>UTI89 / UPEC</strain>
    </source>
</reference>
<organism>
    <name type="scientific">Escherichia coli (strain UTI89 / UPEC)</name>
    <dbReference type="NCBI Taxonomy" id="364106"/>
    <lineage>
        <taxon>Bacteria</taxon>
        <taxon>Pseudomonadati</taxon>
        <taxon>Pseudomonadota</taxon>
        <taxon>Gammaproteobacteria</taxon>
        <taxon>Enterobacterales</taxon>
        <taxon>Enterobacteriaceae</taxon>
        <taxon>Escherichia</taxon>
    </lineage>
</organism>
<keyword id="KW-0963">Cytoplasm</keyword>
<keyword id="KW-0378">Hydrolase</keyword>
<keyword id="KW-0546">Nucleotide metabolism</keyword>
<comment type="function">
    <text evidence="1">Nucleoside triphosphate pyrophosphatase that hydrolyzes 7-methyl-GTP (m(7)GTP). May have a dual role in cell division arrest and in preventing the incorporation of modified nucleotides into cellular nucleic acids.</text>
</comment>
<comment type="catalytic activity">
    <reaction evidence="1">
        <text>N(7)-methyl-GTP + H2O = N(7)-methyl-GMP + diphosphate + H(+)</text>
        <dbReference type="Rhea" id="RHEA:58744"/>
        <dbReference type="ChEBI" id="CHEBI:15377"/>
        <dbReference type="ChEBI" id="CHEBI:15378"/>
        <dbReference type="ChEBI" id="CHEBI:33019"/>
        <dbReference type="ChEBI" id="CHEBI:58285"/>
        <dbReference type="ChEBI" id="CHEBI:87133"/>
    </reaction>
</comment>
<comment type="cofactor">
    <cofactor evidence="1">
        <name>a divalent metal cation</name>
        <dbReference type="ChEBI" id="CHEBI:60240"/>
    </cofactor>
</comment>
<comment type="subcellular location">
    <subcellularLocation>
        <location evidence="1">Cytoplasm</location>
    </subcellularLocation>
</comment>
<comment type="similarity">
    <text evidence="1">Belongs to the Maf family. YceF subfamily.</text>
</comment>
<comment type="sequence caution" evidence="2">
    <conflict type="erroneous initiation">
        <sequence resource="EMBL-CDS" id="ABE06694"/>
    </conflict>
</comment>
<dbReference type="EC" id="3.6.1.-" evidence="1"/>
<dbReference type="EMBL" id="CP000243">
    <property type="protein sequence ID" value="ABE06694.1"/>
    <property type="status" value="ALT_INIT"/>
    <property type="molecule type" value="Genomic_DNA"/>
</dbReference>
<dbReference type="SMR" id="Q1RD70"/>
<dbReference type="KEGG" id="eci:UTI89_C1212"/>
<dbReference type="HOGENOM" id="CLU_040416_1_0_6"/>
<dbReference type="Proteomes" id="UP000001952">
    <property type="component" value="Chromosome"/>
</dbReference>
<dbReference type="GO" id="GO:0005737">
    <property type="term" value="C:cytoplasm"/>
    <property type="evidence" value="ECO:0007669"/>
    <property type="project" value="UniProtKB-SubCell"/>
</dbReference>
<dbReference type="GO" id="GO:0047429">
    <property type="term" value="F:nucleoside triphosphate diphosphatase activity"/>
    <property type="evidence" value="ECO:0007669"/>
    <property type="project" value="InterPro"/>
</dbReference>
<dbReference type="GO" id="GO:0009117">
    <property type="term" value="P:nucleotide metabolic process"/>
    <property type="evidence" value="ECO:0007669"/>
    <property type="project" value="UniProtKB-KW"/>
</dbReference>
<dbReference type="CDD" id="cd00555">
    <property type="entry name" value="Maf"/>
    <property type="match status" value="1"/>
</dbReference>
<dbReference type="FunFam" id="3.90.950.10:FF:000005">
    <property type="entry name" value="7-methyl-GTP pyrophosphatase"/>
    <property type="match status" value="1"/>
</dbReference>
<dbReference type="Gene3D" id="3.90.950.10">
    <property type="match status" value="1"/>
</dbReference>
<dbReference type="HAMAP" id="MF_00528">
    <property type="entry name" value="Maf"/>
    <property type="match status" value="1"/>
</dbReference>
<dbReference type="InterPro" id="IPR029001">
    <property type="entry name" value="ITPase-like_fam"/>
</dbReference>
<dbReference type="InterPro" id="IPR003697">
    <property type="entry name" value="Maf-like"/>
</dbReference>
<dbReference type="NCBIfam" id="TIGR00172">
    <property type="entry name" value="maf"/>
    <property type="match status" value="1"/>
</dbReference>
<dbReference type="PANTHER" id="PTHR43213:SF10">
    <property type="entry name" value="7-METHYL-GTP PYROPHOSPHATASE"/>
    <property type="match status" value="1"/>
</dbReference>
<dbReference type="PANTHER" id="PTHR43213">
    <property type="entry name" value="BIFUNCTIONAL DTTP/UTP PYROPHOSPHATASE/METHYLTRANSFERASE PROTEIN-RELATED"/>
    <property type="match status" value="1"/>
</dbReference>
<dbReference type="Pfam" id="PF02545">
    <property type="entry name" value="Maf"/>
    <property type="match status" value="1"/>
</dbReference>
<dbReference type="PIRSF" id="PIRSF006305">
    <property type="entry name" value="Maf"/>
    <property type="match status" value="1"/>
</dbReference>
<dbReference type="SUPFAM" id="SSF52972">
    <property type="entry name" value="ITPase-like"/>
    <property type="match status" value="1"/>
</dbReference>
<proteinExistence type="inferred from homology"/>
<feature type="chain" id="PRO_0000267308" description="7-methyl-GTP pyrophosphatase">
    <location>
        <begin position="1"/>
        <end position="194"/>
    </location>
</feature>
<feature type="active site" description="Proton acceptor" evidence="1">
    <location>
        <position position="69"/>
    </location>
</feature>
<feature type="site" description="Important for substrate specificity" evidence="1">
    <location>
        <position position="12"/>
    </location>
</feature>
<feature type="site" description="Important for substrate specificity" evidence="1">
    <location>
        <position position="70"/>
    </location>
</feature>
<feature type="site" description="Important for substrate specificity" evidence="1">
    <location>
        <position position="154"/>
    </location>
</feature>
<gene>
    <name type="primary">yceF1</name>
    <name type="ordered locus">UTI89_C1212</name>
</gene>
<accession>Q1RD70</accession>
<sequence>MPKLILASTSPWRRALLEKLQISFECAAPEVDETPRSDESPRQLVLRLAQEKAQSLASRYPDHLIIGSDQVCVLDGEITGKPLTEENARLQLRKASGNIVTFYTGLALFNSANGHLQTEVEPFDVHFRHLSEAEIDNYVRKEHPLHCAGSFKSEGFGITLFERLEGRDPNTLVGLPLIALCQMLRREGKNPLMG</sequence>
<evidence type="ECO:0000255" key="1">
    <source>
        <dbReference type="HAMAP-Rule" id="MF_00528"/>
    </source>
</evidence>
<evidence type="ECO:0000305" key="2"/>
<name>NTPPB_ECOUT</name>